<name>BIOH_ECO27</name>
<reference key="1">
    <citation type="journal article" date="2009" name="J. Bacteriol.">
        <title>Complete genome sequence and comparative genome analysis of enteropathogenic Escherichia coli O127:H6 strain E2348/69.</title>
        <authorList>
            <person name="Iguchi A."/>
            <person name="Thomson N.R."/>
            <person name="Ogura Y."/>
            <person name="Saunders D."/>
            <person name="Ooka T."/>
            <person name="Henderson I.R."/>
            <person name="Harris D."/>
            <person name="Asadulghani M."/>
            <person name="Kurokawa K."/>
            <person name="Dean P."/>
            <person name="Kenny B."/>
            <person name="Quail M.A."/>
            <person name="Thurston S."/>
            <person name="Dougan G."/>
            <person name="Hayashi T."/>
            <person name="Parkhill J."/>
            <person name="Frankel G."/>
        </authorList>
    </citation>
    <scope>NUCLEOTIDE SEQUENCE [LARGE SCALE GENOMIC DNA]</scope>
    <source>
        <strain>E2348/69 / EPEC</strain>
    </source>
</reference>
<gene>
    <name evidence="2" type="primary">bioH</name>
    <name type="ordered locus">E2348C_3657</name>
</gene>
<keyword id="KW-0093">Biotin biosynthesis</keyword>
<keyword id="KW-0963">Cytoplasm</keyword>
<keyword id="KW-0378">Hydrolase</keyword>
<keyword id="KW-1185">Reference proteome</keyword>
<keyword id="KW-0719">Serine esterase</keyword>
<dbReference type="EC" id="3.1.1.85" evidence="2"/>
<dbReference type="EMBL" id="FM180568">
    <property type="protein sequence ID" value="CAS11205.1"/>
    <property type="molecule type" value="Genomic_DNA"/>
</dbReference>
<dbReference type="RefSeq" id="WP_001060053.1">
    <property type="nucleotide sequence ID" value="NC_011601.1"/>
</dbReference>
<dbReference type="SMR" id="B7UKB7"/>
<dbReference type="ESTHER" id="ecoli-bioh">
    <property type="family name" value="BioH"/>
</dbReference>
<dbReference type="MEROPS" id="S33.994"/>
<dbReference type="KEGG" id="ecg:E2348C_3657"/>
<dbReference type="HOGENOM" id="CLU_020336_12_2_6"/>
<dbReference type="UniPathway" id="UPA00078"/>
<dbReference type="Proteomes" id="UP000008205">
    <property type="component" value="Chromosome"/>
</dbReference>
<dbReference type="GO" id="GO:0005737">
    <property type="term" value="C:cytoplasm"/>
    <property type="evidence" value="ECO:0007669"/>
    <property type="project" value="UniProtKB-SubCell"/>
</dbReference>
<dbReference type="GO" id="GO:0090499">
    <property type="term" value="F:pimelyl-[acyl-carrier protein] methyl ester esterase activity"/>
    <property type="evidence" value="ECO:0007669"/>
    <property type="project" value="UniProtKB-EC"/>
</dbReference>
<dbReference type="GO" id="GO:0009102">
    <property type="term" value="P:biotin biosynthetic process"/>
    <property type="evidence" value="ECO:0007669"/>
    <property type="project" value="UniProtKB-UniRule"/>
</dbReference>
<dbReference type="FunFam" id="3.40.50.1820:FF:000045">
    <property type="entry name" value="Pimeloyl-[acyl-carrier protein] methyl ester esterase"/>
    <property type="match status" value="1"/>
</dbReference>
<dbReference type="Gene3D" id="3.40.50.1820">
    <property type="entry name" value="alpha/beta hydrolase"/>
    <property type="match status" value="1"/>
</dbReference>
<dbReference type="HAMAP" id="MF_01260">
    <property type="entry name" value="Carboxylester"/>
    <property type="match status" value="1"/>
</dbReference>
<dbReference type="InterPro" id="IPR000073">
    <property type="entry name" value="AB_hydrolase_1"/>
</dbReference>
<dbReference type="InterPro" id="IPR029058">
    <property type="entry name" value="AB_hydrolase_fold"/>
</dbReference>
<dbReference type="InterPro" id="IPR010076">
    <property type="entry name" value="BioH"/>
</dbReference>
<dbReference type="InterPro" id="IPR050228">
    <property type="entry name" value="Carboxylesterase_BioH"/>
</dbReference>
<dbReference type="NCBIfam" id="TIGR01738">
    <property type="entry name" value="bioH"/>
    <property type="match status" value="1"/>
</dbReference>
<dbReference type="NCBIfam" id="NF007674">
    <property type="entry name" value="PRK10349.1"/>
    <property type="match status" value="1"/>
</dbReference>
<dbReference type="PANTHER" id="PTHR43194">
    <property type="entry name" value="HYDROLASE ALPHA/BETA FOLD FAMILY"/>
    <property type="match status" value="1"/>
</dbReference>
<dbReference type="PANTHER" id="PTHR43194:SF5">
    <property type="entry name" value="PIMELOYL-[ACYL-CARRIER PROTEIN] METHYL ESTER ESTERASE"/>
    <property type="match status" value="1"/>
</dbReference>
<dbReference type="Pfam" id="PF00561">
    <property type="entry name" value="Abhydrolase_1"/>
    <property type="match status" value="1"/>
</dbReference>
<dbReference type="SUPFAM" id="SSF53474">
    <property type="entry name" value="alpha/beta-Hydrolases"/>
    <property type="match status" value="1"/>
</dbReference>
<proteinExistence type="inferred from homology"/>
<accession>B7UKB7</accession>
<sequence>MNNIWWQSKGQGNVHLVLLHGWGLNAEVWRCIDEELSSHFTLHLVDLPGFGRSRGFGALSLADMAEVVLRQAPDKAIWLGWSLGGLVASQIALTHPERVQALVTVASSPCFSARDEWPGIKPDVLAGFQQQLSDDFQRTVERFLALQTMGTETARQDARALKKTVLALPMPEVDVLNGGLEILKMVDLRQPLQNVSMPFLRLYGYLDGLVPRKVVPMLDKLWPHSESYIFAKAAHAPFISHPAEFCRMLVVLKQRV</sequence>
<organism>
    <name type="scientific">Escherichia coli O127:H6 (strain E2348/69 / EPEC)</name>
    <dbReference type="NCBI Taxonomy" id="574521"/>
    <lineage>
        <taxon>Bacteria</taxon>
        <taxon>Pseudomonadati</taxon>
        <taxon>Pseudomonadota</taxon>
        <taxon>Gammaproteobacteria</taxon>
        <taxon>Enterobacterales</taxon>
        <taxon>Enterobacteriaceae</taxon>
        <taxon>Escherichia</taxon>
    </lineage>
</organism>
<protein>
    <recommendedName>
        <fullName evidence="2">Pimeloyl-[acyl-carrier protein] methyl ester esterase</fullName>
        <ecNumber evidence="2">3.1.1.85</ecNumber>
    </recommendedName>
    <alternativeName>
        <fullName evidence="2">Biotin synthesis protein BioH</fullName>
    </alternativeName>
    <alternativeName>
        <fullName evidence="2">Carboxylesterase BioH</fullName>
    </alternativeName>
</protein>
<evidence type="ECO:0000255" key="1"/>
<evidence type="ECO:0000255" key="2">
    <source>
        <dbReference type="HAMAP-Rule" id="MF_01260"/>
    </source>
</evidence>
<comment type="function">
    <text evidence="2">The physiological role of BioH is to remove the methyl group introduced by BioC when the pimeloyl moiety is complete. It allows to synthesize pimeloyl-ACP via the fatty acid synthetic pathway through the hydrolysis of the ester bonds of pimeloyl-ACP esters.</text>
</comment>
<comment type="catalytic activity">
    <reaction evidence="2">
        <text>6-carboxyhexanoyl-[ACP] methyl ester + H2O = 6-carboxyhexanoyl-[ACP] + methanol + H(+)</text>
        <dbReference type="Rhea" id="RHEA:42700"/>
        <dbReference type="Rhea" id="RHEA-COMP:9955"/>
        <dbReference type="Rhea" id="RHEA-COMP:10186"/>
        <dbReference type="ChEBI" id="CHEBI:15377"/>
        <dbReference type="ChEBI" id="CHEBI:15378"/>
        <dbReference type="ChEBI" id="CHEBI:17790"/>
        <dbReference type="ChEBI" id="CHEBI:78846"/>
        <dbReference type="ChEBI" id="CHEBI:82735"/>
        <dbReference type="EC" id="3.1.1.85"/>
    </reaction>
</comment>
<comment type="pathway">
    <text evidence="2">Cofactor biosynthesis; biotin biosynthesis.</text>
</comment>
<comment type="subunit">
    <text evidence="2">Monomer.</text>
</comment>
<comment type="subcellular location">
    <subcellularLocation>
        <location evidence="2">Cytoplasm</location>
    </subcellularLocation>
</comment>
<comment type="similarity">
    <text evidence="2">Belongs to the AB hydrolase superfamily. Carboxylesterase BioH family.</text>
</comment>
<feature type="chain" id="PRO_1000165113" description="Pimeloyl-[acyl-carrier protein] methyl ester esterase">
    <location>
        <begin position="1"/>
        <end position="256"/>
    </location>
</feature>
<feature type="domain" description="AB hydrolase-1" evidence="1">
    <location>
        <begin position="15"/>
        <end position="242"/>
    </location>
</feature>
<feature type="active site" description="Nucleophile" evidence="2">
    <location>
        <position position="82"/>
    </location>
</feature>
<feature type="active site" evidence="2">
    <location>
        <position position="207"/>
    </location>
</feature>
<feature type="active site" evidence="2">
    <location>
        <position position="235"/>
    </location>
</feature>
<feature type="binding site" evidence="2">
    <location>
        <position position="22"/>
    </location>
    <ligand>
        <name>substrate</name>
    </ligand>
</feature>
<feature type="binding site" evidence="2">
    <location>
        <begin position="82"/>
        <end position="83"/>
    </location>
    <ligand>
        <name>substrate</name>
    </ligand>
</feature>
<feature type="binding site" evidence="2">
    <location>
        <begin position="143"/>
        <end position="147"/>
    </location>
    <ligand>
        <name>substrate</name>
    </ligand>
</feature>
<feature type="binding site" evidence="2">
    <location>
        <position position="235"/>
    </location>
    <ligand>
        <name>substrate</name>
    </ligand>
</feature>